<keyword id="KW-0002">3D-structure</keyword>
<keyword id="KW-0589">Pheromone response</keyword>
<keyword id="KW-1185">Reference proteome</keyword>
<keyword id="KW-0677">Repeat</keyword>
<keyword id="KW-0807">Transducer</keyword>
<keyword id="KW-0853">WD repeat</keyword>
<protein>
    <recommendedName>
        <fullName>Guanine nucleotide-binding protein subunit beta</fullName>
    </recommendedName>
</protein>
<evidence type="ECO:0000269" key="1">
    <source>
    </source>
</evidence>
<evidence type="ECO:0000269" key="2">
    <source>
    </source>
</evidence>
<evidence type="ECO:0000269" key="3">
    <source>
    </source>
</evidence>
<evidence type="ECO:0000305" key="4"/>
<evidence type="ECO:0007829" key="5">
    <source>
        <dbReference type="PDB" id="7AD3"/>
    </source>
</evidence>
<comment type="function">
    <text>Implicated in the a- and alpha-factor response pathway. The beta and gamma chains of the putative yeast mating response pathway G protein play a positive role in initiation of the mating response. The beta and gamma chains are required for the GTPase activity, for replacement of GDP by GTP, and for G protein-effector interaction.</text>
</comment>
<comment type="subunit">
    <text evidence="1 3">G proteins are composed of 3 units, alpha, beta and gamma. The beta-gamma subunit complex (STE4-STE18 complex) interacts with PLP1 and PLP2. Interacts with SYG1.</text>
</comment>
<comment type="interaction">
    <interactant intactId="EBI-7390">
        <id>P18851</id>
    </interactant>
    <interactant intactId="EBI-2421">
        <id>P39010</id>
        <label>AKR1</label>
    </interactant>
    <organismsDiffer>false</organismsDiffer>
    <experiments>4</experiments>
</comment>
<comment type="interaction">
    <interactant intactId="EBI-7390">
        <id>P18851</id>
    </interactant>
    <interactant intactId="EBI-4220">
        <id>P11433</id>
        <label>CDC24</label>
    </interactant>
    <organismsDiffer>false</organismsDiffer>
    <experiments>6</experiments>
</comment>
<comment type="interaction">
    <interactant intactId="EBI-7390">
        <id>P18851</id>
    </interactant>
    <interactant intactId="EBI-6780">
        <id>P21268</id>
        <label>FAR1</label>
    </interactant>
    <organismsDiffer>false</organismsDiffer>
    <experiments>2</experiments>
</comment>
<comment type="interaction">
    <interactant intactId="EBI-7390">
        <id>P18851</id>
    </interactant>
    <interactant intactId="EBI-7376">
        <id>P08539</id>
        <label>GPA1</label>
    </interactant>
    <organismsDiffer>false</organismsDiffer>
    <experiments>9</experiments>
</comment>
<comment type="interaction">
    <interactant intactId="EBI-7390">
        <id>P18851</id>
    </interactant>
    <interactant intactId="EBI-7397">
        <id>P18852</id>
        <label>STE18</label>
    </interactant>
    <organismsDiffer>false</organismsDiffer>
    <experiments>4</experiments>
</comment>
<comment type="interaction">
    <interactant intactId="EBI-7390">
        <id>P18851</id>
    </interactant>
    <interactant intactId="EBI-18285">
        <id>Q03497</id>
        <label>STE20</label>
    </interactant>
    <organismsDiffer>false</organismsDiffer>
    <experiments>3</experiments>
</comment>
<comment type="interaction">
    <interactant intactId="EBI-7390">
        <id>P18851</id>
    </interactant>
    <interactant intactId="EBI-18373">
        <id>P32917</id>
        <label>STE5</label>
    </interactant>
    <organismsDiffer>false</organismsDiffer>
    <experiments>3</experiments>
</comment>
<comment type="miscellaneous">
    <text evidence="2">Present with 2050 molecules/cell in log phase SD medium.</text>
</comment>
<comment type="similarity">
    <text evidence="4">Belongs to the WD repeat G protein beta family.</text>
</comment>
<feature type="chain" id="PRO_0000127720" description="Guanine nucleotide-binding protein subunit beta">
    <location>
        <begin position="1"/>
        <end position="423"/>
    </location>
</feature>
<feature type="repeat" description="WD 1">
    <location>
        <begin position="90"/>
        <end position="120"/>
    </location>
</feature>
<feature type="repeat" description="WD 2">
    <location>
        <begin position="132"/>
        <end position="162"/>
    </location>
</feature>
<feature type="repeat" description="WD 3">
    <location>
        <begin position="179"/>
        <end position="208"/>
    </location>
</feature>
<feature type="repeat" description="WD 4">
    <location>
        <begin position="220"/>
        <end position="256"/>
    </location>
</feature>
<feature type="repeat" description="WD 5">
    <location>
        <begin position="268"/>
        <end position="298"/>
    </location>
</feature>
<feature type="repeat" description="WD 6">
    <location>
        <begin position="348"/>
        <end position="377"/>
    </location>
</feature>
<feature type="repeat" description="WD 7">
    <location>
        <begin position="389"/>
        <end position="419"/>
    </location>
</feature>
<feature type="sequence conflict" description="In Ref. 1; AAA35114." evidence="4" ref="1">
    <original>D</original>
    <variation>E</variation>
    <location>
        <position position="33"/>
    </location>
</feature>
<feature type="sequence conflict" description="In Ref. 1; AAA35114." evidence="4" ref="1">
    <original>S</original>
    <variation>L</variation>
    <location>
        <position position="236"/>
    </location>
</feature>
<feature type="helix" evidence="5">
    <location>
        <begin position="65"/>
        <end position="68"/>
    </location>
</feature>
<feature type="helix" evidence="5">
    <location>
        <begin position="69"/>
        <end position="71"/>
    </location>
</feature>
<feature type="strand" evidence="5">
    <location>
        <begin position="97"/>
        <end position="100"/>
    </location>
</feature>
<feature type="strand" evidence="5">
    <location>
        <begin position="106"/>
        <end position="110"/>
    </location>
</feature>
<feature type="strand" evidence="5">
    <location>
        <begin position="112"/>
        <end position="131"/>
    </location>
</feature>
<feature type="strand" evidence="5">
    <location>
        <begin position="139"/>
        <end position="142"/>
    </location>
</feature>
<feature type="strand" evidence="5">
    <location>
        <begin position="146"/>
        <end position="156"/>
    </location>
</feature>
<feature type="strand" evidence="5">
    <location>
        <begin position="158"/>
        <end position="162"/>
    </location>
</feature>
<feature type="strand" evidence="5">
    <location>
        <begin position="173"/>
        <end position="177"/>
    </location>
</feature>
<feature type="strand" evidence="5">
    <location>
        <begin position="184"/>
        <end position="202"/>
    </location>
</feature>
<feature type="strand" evidence="5">
    <location>
        <begin position="204"/>
        <end position="208"/>
    </location>
</feature>
<feature type="turn" evidence="5">
    <location>
        <begin position="209"/>
        <end position="211"/>
    </location>
</feature>
<feature type="strand" evidence="5">
    <location>
        <begin position="243"/>
        <end position="245"/>
    </location>
</feature>
<feature type="strand" evidence="5">
    <location>
        <begin position="257"/>
        <end position="261"/>
    </location>
</feature>
<feature type="strand" evidence="5">
    <location>
        <begin position="273"/>
        <end position="278"/>
    </location>
</feature>
<feature type="strand" evidence="5">
    <location>
        <begin position="282"/>
        <end position="289"/>
    </location>
</feature>
<feature type="strand" evidence="5">
    <location>
        <begin position="294"/>
        <end position="300"/>
    </location>
</feature>
<feature type="strand" evidence="5">
    <location>
        <begin position="352"/>
        <end position="357"/>
    </location>
</feature>
<feature type="strand" evidence="5">
    <location>
        <begin position="359"/>
        <end position="371"/>
    </location>
</feature>
<feature type="strand" evidence="5">
    <location>
        <begin position="373"/>
        <end position="377"/>
    </location>
</feature>
<feature type="turn" evidence="5">
    <location>
        <begin position="378"/>
        <end position="381"/>
    </location>
</feature>
<feature type="strand" evidence="5">
    <location>
        <begin position="396"/>
        <end position="399"/>
    </location>
</feature>
<feature type="strand" evidence="5">
    <location>
        <begin position="401"/>
        <end position="404"/>
    </location>
</feature>
<feature type="strand" evidence="5">
    <location>
        <begin position="406"/>
        <end position="409"/>
    </location>
</feature>
<feature type="strand" evidence="5">
    <location>
        <begin position="415"/>
        <end position="418"/>
    </location>
</feature>
<organism>
    <name type="scientific">Saccharomyces cerevisiae (strain ATCC 204508 / S288c)</name>
    <name type="common">Baker's yeast</name>
    <dbReference type="NCBI Taxonomy" id="559292"/>
    <lineage>
        <taxon>Eukaryota</taxon>
        <taxon>Fungi</taxon>
        <taxon>Dikarya</taxon>
        <taxon>Ascomycota</taxon>
        <taxon>Saccharomycotina</taxon>
        <taxon>Saccharomycetes</taxon>
        <taxon>Saccharomycetales</taxon>
        <taxon>Saccharomycetaceae</taxon>
        <taxon>Saccharomyces</taxon>
    </lineage>
</organism>
<proteinExistence type="evidence at protein level"/>
<reference key="1">
    <citation type="journal article" date="1989" name="Cell">
        <title>The STE4 and STE18 genes of yeast encode potential beta and gamma subunits of the mating factor receptor-coupled G protein.</title>
        <authorList>
            <person name="Whiteway M."/>
            <person name="Hougan L."/>
            <person name="Dignard D."/>
            <person name="Thomas D.Y."/>
            <person name="Bell L."/>
            <person name="Saari G.C."/>
            <person name="Grant F.J."/>
            <person name="O'Hara P."/>
            <person name="Mackay V.L."/>
        </authorList>
    </citation>
    <scope>NUCLEOTIDE SEQUENCE [GENOMIC DNA]</scope>
</reference>
<reference key="2">
    <citation type="journal article" date="1996" name="Yeast">
        <title>Sequence and analysis of a 33 kb fragment from the right arm of chromosome XV of the yeast Saccharomyces cerevisiae.</title>
        <authorList>
            <person name="Galisson F."/>
            <person name="Dujon B."/>
        </authorList>
    </citation>
    <scope>NUCLEOTIDE SEQUENCE [GENOMIC DNA]</scope>
    <source>
        <strain>ATCC 96604 / S288c / FY1679</strain>
    </source>
</reference>
<reference key="3">
    <citation type="journal article" date="1997" name="Nature">
        <title>The nucleotide sequence of Saccharomyces cerevisiae chromosome XV.</title>
        <authorList>
            <person name="Dujon B."/>
            <person name="Albermann K."/>
            <person name="Aldea M."/>
            <person name="Alexandraki D."/>
            <person name="Ansorge W."/>
            <person name="Arino J."/>
            <person name="Benes V."/>
            <person name="Bohn C."/>
            <person name="Bolotin-Fukuhara M."/>
            <person name="Bordonne R."/>
            <person name="Boyer J."/>
            <person name="Camasses A."/>
            <person name="Casamayor A."/>
            <person name="Casas C."/>
            <person name="Cheret G."/>
            <person name="Cziepluch C."/>
            <person name="Daignan-Fornier B."/>
            <person name="Dang V.-D."/>
            <person name="de Haan M."/>
            <person name="Delius H."/>
            <person name="Durand P."/>
            <person name="Fairhead C."/>
            <person name="Feldmann H."/>
            <person name="Gaillon L."/>
            <person name="Galisson F."/>
            <person name="Gamo F.-J."/>
            <person name="Gancedo C."/>
            <person name="Goffeau A."/>
            <person name="Goulding S.E."/>
            <person name="Grivell L.A."/>
            <person name="Habbig B."/>
            <person name="Hand N.J."/>
            <person name="Hani J."/>
            <person name="Hattenhorst U."/>
            <person name="Hebling U."/>
            <person name="Hernando Y."/>
            <person name="Herrero E."/>
            <person name="Heumann K."/>
            <person name="Hiesel R."/>
            <person name="Hilger F."/>
            <person name="Hofmann B."/>
            <person name="Hollenberg C.P."/>
            <person name="Hughes B."/>
            <person name="Jauniaux J.-C."/>
            <person name="Kalogeropoulos A."/>
            <person name="Katsoulou C."/>
            <person name="Kordes E."/>
            <person name="Lafuente M.J."/>
            <person name="Landt O."/>
            <person name="Louis E.J."/>
            <person name="Maarse A.C."/>
            <person name="Madania A."/>
            <person name="Mannhaupt G."/>
            <person name="Marck C."/>
            <person name="Martin R.P."/>
            <person name="Mewes H.-W."/>
            <person name="Michaux G."/>
            <person name="Paces V."/>
            <person name="Parle-McDermott A.G."/>
            <person name="Pearson B.M."/>
            <person name="Perrin A."/>
            <person name="Pettersson B."/>
            <person name="Poch O."/>
            <person name="Pohl T.M."/>
            <person name="Poirey R."/>
            <person name="Portetelle D."/>
            <person name="Pujol A."/>
            <person name="Purnelle B."/>
            <person name="Ramezani Rad M."/>
            <person name="Rechmann S."/>
            <person name="Schwager C."/>
            <person name="Schweizer M."/>
            <person name="Sor F."/>
            <person name="Sterky F."/>
            <person name="Tarassov I.A."/>
            <person name="Teodoru C."/>
            <person name="Tettelin H."/>
            <person name="Thierry A."/>
            <person name="Tobiasch E."/>
            <person name="Tzermia M."/>
            <person name="Uhlen M."/>
            <person name="Unseld M."/>
            <person name="Valens M."/>
            <person name="Vandenbol M."/>
            <person name="Vetter I."/>
            <person name="Vlcek C."/>
            <person name="Voet M."/>
            <person name="Volckaert G."/>
            <person name="Voss H."/>
            <person name="Wambutt R."/>
            <person name="Wedler H."/>
            <person name="Wiemann S."/>
            <person name="Winsor B."/>
            <person name="Wolfe K.H."/>
            <person name="Zollner A."/>
            <person name="Zumstein E."/>
            <person name="Kleine K."/>
        </authorList>
    </citation>
    <scope>NUCLEOTIDE SEQUENCE [LARGE SCALE GENOMIC DNA]</scope>
    <source>
        <strain>ATCC 204508 / S288c</strain>
    </source>
</reference>
<reference key="4">
    <citation type="journal article" date="2014" name="G3 (Bethesda)">
        <title>The reference genome sequence of Saccharomyces cerevisiae: Then and now.</title>
        <authorList>
            <person name="Engel S.R."/>
            <person name="Dietrich F.S."/>
            <person name="Fisk D.G."/>
            <person name="Binkley G."/>
            <person name="Balakrishnan R."/>
            <person name="Costanzo M.C."/>
            <person name="Dwight S.S."/>
            <person name="Hitz B.C."/>
            <person name="Karra K."/>
            <person name="Nash R.S."/>
            <person name="Weng S."/>
            <person name="Wong E.D."/>
            <person name="Lloyd P."/>
            <person name="Skrzypek M.S."/>
            <person name="Miyasato S.R."/>
            <person name="Simison M."/>
            <person name="Cherry J.M."/>
        </authorList>
    </citation>
    <scope>GENOME REANNOTATION</scope>
    <source>
        <strain>ATCC 204508 / S288c</strain>
    </source>
</reference>
<reference key="5">
    <citation type="journal article" date="1995" name="J. Biol. Chem.">
        <title>Truncated forms of a novel yeast protein suppress the lethality of a G protein alpha subunit deficiency by interacting with the beta subunit.</title>
        <authorList>
            <person name="Spain B.H."/>
            <person name="Koo D."/>
            <person name="Ramakrishnan M."/>
            <person name="Dzudzor B."/>
            <person name="Colicelli J."/>
        </authorList>
    </citation>
    <scope>INTERACTION WITH SYG1</scope>
</reference>
<reference key="6">
    <citation type="journal article" date="2000" name="J. Biol. Chem.">
        <title>Functional analysis of Plp1 and Plp2, two homologues of phosducin in yeast.</title>
        <authorList>
            <person name="Flanary P.L."/>
            <person name="DiBello P.R."/>
            <person name="Estrada P."/>
            <person name="Dohlman H.G."/>
        </authorList>
    </citation>
    <scope>INTERACTION WITH PLP1 AND PLP2</scope>
</reference>
<reference key="7">
    <citation type="journal article" date="2003" name="Nature">
        <title>Global analysis of protein expression in yeast.</title>
        <authorList>
            <person name="Ghaemmaghami S."/>
            <person name="Huh W.-K."/>
            <person name="Bower K."/>
            <person name="Howson R.W."/>
            <person name="Belle A."/>
            <person name="Dephoure N."/>
            <person name="O'Shea E.K."/>
            <person name="Weissman J.S."/>
        </authorList>
    </citation>
    <scope>LEVEL OF PROTEIN EXPRESSION [LARGE SCALE ANALYSIS]</scope>
</reference>
<reference key="8">
    <citation type="journal article" date="2008" name="Mol. Cell. Proteomics">
        <title>A multidimensional chromatography technology for in-depth phosphoproteome analysis.</title>
        <authorList>
            <person name="Albuquerque C.P."/>
            <person name="Smolka M.B."/>
            <person name="Payne S.H."/>
            <person name="Bafna V."/>
            <person name="Eng J."/>
            <person name="Zhou H."/>
        </authorList>
    </citation>
    <scope>IDENTIFICATION BY MASS SPECTROMETRY [LARGE SCALE ANALYSIS]</scope>
</reference>
<reference key="9">
    <citation type="journal article" date="2009" name="Science">
        <title>Global analysis of Cdk1 substrate phosphorylation sites provides insights into evolution.</title>
        <authorList>
            <person name="Holt L.J."/>
            <person name="Tuch B.B."/>
            <person name="Villen J."/>
            <person name="Johnson A.D."/>
            <person name="Gygi S.P."/>
            <person name="Morgan D.O."/>
        </authorList>
    </citation>
    <scope>IDENTIFICATION BY MASS SPECTROMETRY [LARGE SCALE ANALYSIS]</scope>
</reference>
<sequence length="423" mass="46581">MAAHQMDSITYSNNVTQQYIQPQSLQDISAVEDEIQNKIEAARQESKQLHAQINKAKHKIQDASLFQMANKVTSLTKNKINLKPNIVLKGHNNKISDFRWSRDSKRILSASQDGFMLIWDSASGLKQNAIPLDSQWVLSCAISPSSTLVASAGLNNNCTIYRVSKENRVAQNVASIFKGHTCYISDIEFTDNAHILTASGDMTCALWDIPKAKRVREYSDHLGDVLALAIPEEPNSENSSNTFASCGSDGYTYIWDSRSPSAVQSFYVNDSDINALRFFKDGMSIVAGSDNGAINMYDLRSDCSIATFSLFRGYEERTPTPTYMAANMEYNTAQSPQTLKSTSSSYLDNQGVVSLDFSASGRLMYSCYTDIGCVVWDVLKGEIVGKLEGHGGRVTGVRSSPDGLAVCTGSWDSTMKIWSPGYQ</sequence>
<name>GBB_YEAST</name>
<gene>
    <name type="primary">STE4</name>
    <name type="ordered locus">YOR212W</name>
    <name type="ORF">YOR50-2</name>
</gene>
<accession>P18851</accession>
<accession>D6W2R8</accession>
<dbReference type="EMBL" id="M23982">
    <property type="protein sequence ID" value="AAA35114.1"/>
    <property type="molecule type" value="Genomic_DNA"/>
</dbReference>
<dbReference type="EMBL" id="X92441">
    <property type="protein sequence ID" value="CAA63175.1"/>
    <property type="molecule type" value="Genomic_DNA"/>
</dbReference>
<dbReference type="EMBL" id="Z75120">
    <property type="protein sequence ID" value="CAA99427.1"/>
    <property type="molecule type" value="Genomic_DNA"/>
</dbReference>
<dbReference type="EMBL" id="BK006948">
    <property type="protein sequence ID" value="DAA10984.1"/>
    <property type="molecule type" value="Genomic_DNA"/>
</dbReference>
<dbReference type="PIR" id="S60939">
    <property type="entry name" value="S60939"/>
</dbReference>
<dbReference type="RefSeq" id="NP_014855.3">
    <property type="nucleotide sequence ID" value="NM_001183631.3"/>
</dbReference>
<dbReference type="PDB" id="7AD3">
    <property type="method" value="EM"/>
    <property type="resolution" value="3.50 A"/>
    <property type="chains" value="F=1-423"/>
</dbReference>
<dbReference type="PDBsum" id="7AD3"/>
<dbReference type="SMR" id="P18851"/>
<dbReference type="BioGRID" id="34607">
    <property type="interactions" value="91"/>
</dbReference>
<dbReference type="ComplexPortal" id="CPX-1645">
    <property type="entry name" value="Ste4-Ste18 heterodimer"/>
</dbReference>
<dbReference type="ComplexPortal" id="CPX-1646">
    <property type="entry name" value="G protein heterotrimer"/>
</dbReference>
<dbReference type="ComplexPortal" id="CPX-977">
    <property type="entry name" value="CDC24-FAR1-Gbetagamma complex"/>
</dbReference>
<dbReference type="DIP" id="DIP-954N"/>
<dbReference type="FunCoup" id="P18851">
    <property type="interactions" value="582"/>
</dbReference>
<dbReference type="IntAct" id="P18851">
    <property type="interactions" value="65"/>
</dbReference>
<dbReference type="MINT" id="P18851"/>
<dbReference type="STRING" id="4932.YOR212W"/>
<dbReference type="iPTMnet" id="P18851"/>
<dbReference type="PaxDb" id="4932-YOR212W"/>
<dbReference type="PeptideAtlas" id="P18851"/>
<dbReference type="DNASU" id="854387"/>
<dbReference type="EnsemblFungi" id="YOR212W_mRNA">
    <property type="protein sequence ID" value="YOR212W"/>
    <property type="gene ID" value="YOR212W"/>
</dbReference>
<dbReference type="GeneID" id="854387"/>
<dbReference type="KEGG" id="sce:YOR212W"/>
<dbReference type="AGR" id="SGD:S000005738"/>
<dbReference type="SGD" id="S000005738">
    <property type="gene designation" value="STE4"/>
</dbReference>
<dbReference type="VEuPathDB" id="FungiDB:YOR212W"/>
<dbReference type="eggNOG" id="KOG0286">
    <property type="taxonomic scope" value="Eukaryota"/>
</dbReference>
<dbReference type="GeneTree" id="ENSGT01000000214413"/>
<dbReference type="HOGENOM" id="CLU_000288_57_34_1"/>
<dbReference type="InParanoid" id="P18851"/>
<dbReference type="OMA" id="PLDSQWV"/>
<dbReference type="OrthoDB" id="10255630at2759"/>
<dbReference type="BioCyc" id="YEAST:G3O-33714-MONOMER"/>
<dbReference type="Reactome" id="R-SCE-6814122">
    <property type="pathway name" value="Cooperation of PDCL (PhLP1) and TRiC/CCT in G-protein beta folding"/>
</dbReference>
<dbReference type="BioGRID-ORCS" id="854387">
    <property type="hits" value="0 hits in 10 CRISPR screens"/>
</dbReference>
<dbReference type="PRO" id="PR:P18851"/>
<dbReference type="Proteomes" id="UP000002311">
    <property type="component" value="Chromosome XV"/>
</dbReference>
<dbReference type="RNAct" id="P18851">
    <property type="molecule type" value="protein"/>
</dbReference>
<dbReference type="GO" id="GO:0120171">
    <property type="term" value="C:Cdc24p-Far1p-Gbetagamma complex"/>
    <property type="evidence" value="ECO:0000314"/>
    <property type="project" value="SGD"/>
</dbReference>
<dbReference type="GO" id="GO:0005938">
    <property type="term" value="C:cell cortex"/>
    <property type="evidence" value="ECO:0000303"/>
    <property type="project" value="ComplexPortal"/>
</dbReference>
<dbReference type="GO" id="GO:0005737">
    <property type="term" value="C:cytoplasm"/>
    <property type="evidence" value="ECO:0000318"/>
    <property type="project" value="GO_Central"/>
</dbReference>
<dbReference type="GO" id="GO:0031680">
    <property type="term" value="C:G-protein beta/gamma-subunit complex"/>
    <property type="evidence" value="ECO:0000314"/>
    <property type="project" value="SGD"/>
</dbReference>
<dbReference type="GO" id="GO:0005834">
    <property type="term" value="C:heterotrimeric G-protein complex"/>
    <property type="evidence" value="ECO:0000314"/>
    <property type="project" value="SGD"/>
</dbReference>
<dbReference type="GO" id="GO:0005937">
    <property type="term" value="C:mating projection"/>
    <property type="evidence" value="ECO:0000314"/>
    <property type="project" value="SGD"/>
</dbReference>
<dbReference type="GO" id="GO:0005886">
    <property type="term" value="C:plasma membrane"/>
    <property type="evidence" value="ECO:0000314"/>
    <property type="project" value="ComplexPortal"/>
</dbReference>
<dbReference type="GO" id="GO:0001965">
    <property type="term" value="F:G-protein alpha-subunit binding"/>
    <property type="evidence" value="ECO:0000353"/>
    <property type="project" value="SGD"/>
</dbReference>
<dbReference type="GO" id="GO:0031682">
    <property type="term" value="F:G-protein gamma-subunit binding"/>
    <property type="evidence" value="ECO:0000353"/>
    <property type="project" value="SGD"/>
</dbReference>
<dbReference type="GO" id="GO:0019901">
    <property type="term" value="F:protein kinase binding"/>
    <property type="evidence" value="ECO:0000314"/>
    <property type="project" value="SGD"/>
</dbReference>
<dbReference type="GO" id="GO:0097110">
    <property type="term" value="F:scaffold protein binding"/>
    <property type="evidence" value="ECO:0000353"/>
    <property type="project" value="SGD"/>
</dbReference>
<dbReference type="GO" id="GO:0030159">
    <property type="term" value="F:signaling receptor complex adaptor activity"/>
    <property type="evidence" value="ECO:0000318"/>
    <property type="project" value="GO_Central"/>
</dbReference>
<dbReference type="GO" id="GO:0031267">
    <property type="term" value="F:small GTPase binding"/>
    <property type="evidence" value="ECO:0000315"/>
    <property type="project" value="SGD"/>
</dbReference>
<dbReference type="GO" id="GO:0043577">
    <property type="term" value="P:chemotropism"/>
    <property type="evidence" value="ECO:0000315"/>
    <property type="project" value="SGD"/>
</dbReference>
<dbReference type="GO" id="GO:0061951">
    <property type="term" value="P:establishment of protein localization to plasma membrane"/>
    <property type="evidence" value="ECO:0000315"/>
    <property type="project" value="SGD"/>
</dbReference>
<dbReference type="GO" id="GO:0007186">
    <property type="term" value="P:G protein-coupled receptor signaling pathway"/>
    <property type="evidence" value="ECO:0000318"/>
    <property type="project" value="GO_Central"/>
</dbReference>
<dbReference type="GO" id="GO:0001403">
    <property type="term" value="P:invasive growth in response to glucose limitation"/>
    <property type="evidence" value="ECO:0000315"/>
    <property type="project" value="SGD"/>
</dbReference>
<dbReference type="GO" id="GO:0000750">
    <property type="term" value="P:pheromone-dependent signal transduction involved in conjugation with cellular fusion"/>
    <property type="evidence" value="ECO:0000314"/>
    <property type="project" value="ComplexPortal"/>
</dbReference>
<dbReference type="GO" id="GO:1903260">
    <property type="term" value="P:protein localization to mating projection tip"/>
    <property type="evidence" value="ECO:0000315"/>
    <property type="project" value="SGD"/>
</dbReference>
<dbReference type="GO" id="GO:0010969">
    <property type="term" value="P:regulation of pheromone-dependent signal transduction involved in conjugation with cellular fusion"/>
    <property type="evidence" value="ECO:0000303"/>
    <property type="project" value="ComplexPortal"/>
</dbReference>
<dbReference type="GO" id="GO:0000749">
    <property type="term" value="P:response to pheromone triggering conjugation with cellular fusion"/>
    <property type="evidence" value="ECO:0000314"/>
    <property type="project" value="SGD"/>
</dbReference>
<dbReference type="CDD" id="cd00200">
    <property type="entry name" value="WD40"/>
    <property type="match status" value="1"/>
</dbReference>
<dbReference type="FunFam" id="2.130.10.10:FF:001091">
    <property type="entry name" value="G protein beta subunit"/>
    <property type="match status" value="1"/>
</dbReference>
<dbReference type="Gene3D" id="2.130.10.10">
    <property type="entry name" value="YVTN repeat-like/Quinoprotein amine dehydrogenase"/>
    <property type="match status" value="1"/>
</dbReference>
<dbReference type="InterPro" id="IPR020472">
    <property type="entry name" value="G-protein_beta_WD-40_rep"/>
</dbReference>
<dbReference type="InterPro" id="IPR001632">
    <property type="entry name" value="Gprotein_B"/>
</dbReference>
<dbReference type="InterPro" id="IPR016346">
    <property type="entry name" value="Guanine_nucleotide-bd_bsu"/>
</dbReference>
<dbReference type="InterPro" id="IPR015943">
    <property type="entry name" value="WD40/YVTN_repeat-like_dom_sf"/>
</dbReference>
<dbReference type="InterPro" id="IPR019775">
    <property type="entry name" value="WD40_repeat_CS"/>
</dbReference>
<dbReference type="InterPro" id="IPR036322">
    <property type="entry name" value="WD40_repeat_dom_sf"/>
</dbReference>
<dbReference type="InterPro" id="IPR001680">
    <property type="entry name" value="WD40_rpt"/>
</dbReference>
<dbReference type="PANTHER" id="PTHR19850">
    <property type="entry name" value="GUANINE NUCLEOTIDE-BINDING PROTEIN BETA G PROTEIN BETA"/>
    <property type="match status" value="1"/>
</dbReference>
<dbReference type="Pfam" id="PF00400">
    <property type="entry name" value="WD40"/>
    <property type="match status" value="1"/>
</dbReference>
<dbReference type="Pfam" id="PF25391">
    <property type="entry name" value="WD40_Gbeta"/>
    <property type="match status" value="1"/>
</dbReference>
<dbReference type="PIRSF" id="PIRSF002394">
    <property type="entry name" value="GN-bd_beta"/>
    <property type="match status" value="1"/>
</dbReference>
<dbReference type="PRINTS" id="PR00319">
    <property type="entry name" value="GPROTEINB"/>
</dbReference>
<dbReference type="PRINTS" id="PR00320">
    <property type="entry name" value="GPROTEINBRPT"/>
</dbReference>
<dbReference type="SMART" id="SM00320">
    <property type="entry name" value="WD40"/>
    <property type="match status" value="7"/>
</dbReference>
<dbReference type="SUPFAM" id="SSF50978">
    <property type="entry name" value="WD40 repeat-like"/>
    <property type="match status" value="1"/>
</dbReference>
<dbReference type="PROSITE" id="PS00678">
    <property type="entry name" value="WD_REPEATS_1"/>
    <property type="match status" value="3"/>
</dbReference>
<dbReference type="PROSITE" id="PS50082">
    <property type="entry name" value="WD_REPEATS_2"/>
    <property type="match status" value="4"/>
</dbReference>
<dbReference type="PROSITE" id="PS50294">
    <property type="entry name" value="WD_REPEATS_REGION"/>
    <property type="match status" value="1"/>
</dbReference>